<feature type="chain" id="PRO_0000254745" description="Cytochrome b">
    <location>
        <begin position="1"/>
        <end position="379"/>
    </location>
</feature>
<feature type="transmembrane region" description="Helical" evidence="2">
    <location>
        <begin position="33"/>
        <end position="53"/>
    </location>
</feature>
<feature type="transmembrane region" description="Helical" evidence="2">
    <location>
        <begin position="77"/>
        <end position="98"/>
    </location>
</feature>
<feature type="transmembrane region" description="Helical" evidence="2">
    <location>
        <begin position="113"/>
        <end position="133"/>
    </location>
</feature>
<feature type="transmembrane region" description="Helical" evidence="2">
    <location>
        <begin position="178"/>
        <end position="198"/>
    </location>
</feature>
<feature type="transmembrane region" description="Helical" evidence="2">
    <location>
        <begin position="226"/>
        <end position="246"/>
    </location>
</feature>
<feature type="transmembrane region" description="Helical" evidence="2">
    <location>
        <begin position="288"/>
        <end position="308"/>
    </location>
</feature>
<feature type="transmembrane region" description="Helical" evidence="2">
    <location>
        <begin position="320"/>
        <end position="340"/>
    </location>
</feature>
<feature type="transmembrane region" description="Helical" evidence="2">
    <location>
        <begin position="347"/>
        <end position="367"/>
    </location>
</feature>
<feature type="binding site" description="axial binding residue" evidence="2">
    <location>
        <position position="83"/>
    </location>
    <ligand>
        <name>heme b</name>
        <dbReference type="ChEBI" id="CHEBI:60344"/>
        <label>b562</label>
    </ligand>
    <ligandPart>
        <name>Fe</name>
        <dbReference type="ChEBI" id="CHEBI:18248"/>
    </ligandPart>
</feature>
<feature type="binding site" description="axial binding residue" evidence="2">
    <location>
        <position position="97"/>
    </location>
    <ligand>
        <name>heme b</name>
        <dbReference type="ChEBI" id="CHEBI:60344"/>
        <label>b566</label>
    </ligand>
    <ligandPart>
        <name>Fe</name>
        <dbReference type="ChEBI" id="CHEBI:18248"/>
    </ligandPart>
</feature>
<feature type="binding site" description="axial binding residue" evidence="2">
    <location>
        <position position="182"/>
    </location>
    <ligand>
        <name>heme b</name>
        <dbReference type="ChEBI" id="CHEBI:60344"/>
        <label>b562</label>
    </ligand>
    <ligandPart>
        <name>Fe</name>
        <dbReference type="ChEBI" id="CHEBI:18248"/>
    </ligandPart>
</feature>
<feature type="binding site" description="axial binding residue" evidence="2">
    <location>
        <position position="196"/>
    </location>
    <ligand>
        <name>heme b</name>
        <dbReference type="ChEBI" id="CHEBI:60344"/>
        <label>b566</label>
    </ligand>
    <ligandPart>
        <name>Fe</name>
        <dbReference type="ChEBI" id="CHEBI:18248"/>
    </ligandPart>
</feature>
<feature type="binding site" evidence="2">
    <location>
        <position position="201"/>
    </location>
    <ligand>
        <name>a ubiquinone</name>
        <dbReference type="ChEBI" id="CHEBI:16389"/>
    </ligand>
</feature>
<geneLocation type="mitochondrion"/>
<accession>Q5F4F1</accession>
<organism>
    <name type="scientific">Pipistrellus hesperidus</name>
    <name type="common">African pipistrelle</name>
    <name type="synonym">Dusky pipistrelle</name>
    <dbReference type="NCBI Taxonomy" id="294653"/>
    <lineage>
        <taxon>Eukaryota</taxon>
        <taxon>Metazoa</taxon>
        <taxon>Chordata</taxon>
        <taxon>Craniata</taxon>
        <taxon>Vertebrata</taxon>
        <taxon>Euteleostomi</taxon>
        <taxon>Mammalia</taxon>
        <taxon>Eutheria</taxon>
        <taxon>Laurasiatheria</taxon>
        <taxon>Chiroptera</taxon>
        <taxon>Yangochiroptera</taxon>
        <taxon>Vespertilionidae</taxon>
        <taxon>Pipistrellus</taxon>
    </lineage>
</organism>
<name>CYB_PIPHE</name>
<evidence type="ECO:0000250" key="1"/>
<evidence type="ECO:0000250" key="2">
    <source>
        <dbReference type="UniProtKB" id="P00157"/>
    </source>
</evidence>
<evidence type="ECO:0000255" key="3">
    <source>
        <dbReference type="PROSITE-ProRule" id="PRU00967"/>
    </source>
</evidence>
<evidence type="ECO:0000255" key="4">
    <source>
        <dbReference type="PROSITE-ProRule" id="PRU00968"/>
    </source>
</evidence>
<proteinExistence type="inferred from homology"/>
<comment type="function">
    <text evidence="2">Component of the ubiquinol-cytochrome c reductase complex (complex III or cytochrome b-c1 complex) that is part of the mitochondrial respiratory chain. The b-c1 complex mediates electron transfer from ubiquinol to cytochrome c. Contributes to the generation of a proton gradient across the mitochondrial membrane that is then used for ATP synthesis.</text>
</comment>
<comment type="cofactor">
    <cofactor evidence="2">
        <name>heme b</name>
        <dbReference type="ChEBI" id="CHEBI:60344"/>
    </cofactor>
    <text evidence="2">Binds 2 heme b groups non-covalently.</text>
</comment>
<comment type="subunit">
    <text evidence="2">The cytochrome bc1 complex contains 11 subunits: 3 respiratory subunits (MT-CYB, CYC1 and UQCRFS1), 2 core proteins (UQCRC1 and UQCRC2) and 6 low-molecular weight proteins (UQCRH/QCR6, UQCRB/QCR7, UQCRQ/QCR8, UQCR10/QCR9, UQCR11/QCR10 and a cleavage product of UQCRFS1). This cytochrome bc1 complex then forms a dimer.</text>
</comment>
<comment type="subcellular location">
    <subcellularLocation>
        <location evidence="2">Mitochondrion inner membrane</location>
        <topology evidence="2">Multi-pass membrane protein</topology>
    </subcellularLocation>
</comment>
<comment type="miscellaneous">
    <text evidence="1">Heme 1 (or BL or b562) is low-potential and absorbs at about 562 nm, and heme 2 (or BH or b566) is high-potential and absorbs at about 566 nm.</text>
</comment>
<comment type="similarity">
    <text evidence="3 4">Belongs to the cytochrome b family.</text>
</comment>
<comment type="caution">
    <text evidence="2">The full-length protein contains only eight transmembrane helices, not nine as predicted by bioinformatics tools.</text>
</comment>
<protein>
    <recommendedName>
        <fullName>Cytochrome b</fullName>
    </recommendedName>
    <alternativeName>
        <fullName>Complex III subunit 3</fullName>
    </alternativeName>
    <alternativeName>
        <fullName>Complex III subunit III</fullName>
    </alternativeName>
    <alternativeName>
        <fullName>Cytochrome b-c1 complex subunit 3</fullName>
    </alternativeName>
    <alternativeName>
        <fullName>Ubiquinol-cytochrome-c reductase complex cytochrome b subunit</fullName>
    </alternativeName>
</protein>
<reference key="1">
    <citation type="journal article" date="2004" name="Acta Chiropt.">
        <title>Phylogeny of African myotis bats (Chiroptera, Vespertilionidae) inferred from cytochrome b sequences.</title>
        <authorList>
            <person name="Stadelmann B."/>
            <person name="Jacobs D.S."/>
            <person name="Schoeman C."/>
            <person name="Ruedi M."/>
        </authorList>
    </citation>
    <scope>NUCLEOTIDE SEQUENCE [GENOMIC DNA]</scope>
    <source>
        <tissue>Wing</tissue>
    </source>
</reference>
<dbReference type="EMBL" id="AJ841968">
    <property type="protein sequence ID" value="CAH56560.1"/>
    <property type="molecule type" value="Genomic_DNA"/>
</dbReference>
<dbReference type="SMR" id="Q5F4F1"/>
<dbReference type="GO" id="GO:0005743">
    <property type="term" value="C:mitochondrial inner membrane"/>
    <property type="evidence" value="ECO:0007669"/>
    <property type="project" value="UniProtKB-SubCell"/>
</dbReference>
<dbReference type="GO" id="GO:0045275">
    <property type="term" value="C:respiratory chain complex III"/>
    <property type="evidence" value="ECO:0007669"/>
    <property type="project" value="InterPro"/>
</dbReference>
<dbReference type="GO" id="GO:0046872">
    <property type="term" value="F:metal ion binding"/>
    <property type="evidence" value="ECO:0007669"/>
    <property type="project" value="UniProtKB-KW"/>
</dbReference>
<dbReference type="GO" id="GO:0008121">
    <property type="term" value="F:ubiquinol-cytochrome-c reductase activity"/>
    <property type="evidence" value="ECO:0007669"/>
    <property type="project" value="InterPro"/>
</dbReference>
<dbReference type="GO" id="GO:0006122">
    <property type="term" value="P:mitochondrial electron transport, ubiquinol to cytochrome c"/>
    <property type="evidence" value="ECO:0007669"/>
    <property type="project" value="TreeGrafter"/>
</dbReference>
<dbReference type="CDD" id="cd00290">
    <property type="entry name" value="cytochrome_b_C"/>
    <property type="match status" value="1"/>
</dbReference>
<dbReference type="CDD" id="cd00284">
    <property type="entry name" value="Cytochrome_b_N"/>
    <property type="match status" value="1"/>
</dbReference>
<dbReference type="FunFam" id="1.20.810.10:FF:000002">
    <property type="entry name" value="Cytochrome b"/>
    <property type="match status" value="1"/>
</dbReference>
<dbReference type="Gene3D" id="1.20.810.10">
    <property type="entry name" value="Cytochrome Bc1 Complex, Chain C"/>
    <property type="match status" value="1"/>
</dbReference>
<dbReference type="InterPro" id="IPR005798">
    <property type="entry name" value="Cyt_b/b6_C"/>
</dbReference>
<dbReference type="InterPro" id="IPR036150">
    <property type="entry name" value="Cyt_b/b6_C_sf"/>
</dbReference>
<dbReference type="InterPro" id="IPR005797">
    <property type="entry name" value="Cyt_b/b6_N"/>
</dbReference>
<dbReference type="InterPro" id="IPR027387">
    <property type="entry name" value="Cytb/b6-like_sf"/>
</dbReference>
<dbReference type="InterPro" id="IPR030689">
    <property type="entry name" value="Cytochrome_b"/>
</dbReference>
<dbReference type="InterPro" id="IPR048260">
    <property type="entry name" value="Cytochrome_b_C_euk/bac"/>
</dbReference>
<dbReference type="InterPro" id="IPR048259">
    <property type="entry name" value="Cytochrome_b_N_euk/bac"/>
</dbReference>
<dbReference type="InterPro" id="IPR016174">
    <property type="entry name" value="Di-haem_cyt_TM"/>
</dbReference>
<dbReference type="PANTHER" id="PTHR19271">
    <property type="entry name" value="CYTOCHROME B"/>
    <property type="match status" value="1"/>
</dbReference>
<dbReference type="PANTHER" id="PTHR19271:SF16">
    <property type="entry name" value="CYTOCHROME B"/>
    <property type="match status" value="1"/>
</dbReference>
<dbReference type="Pfam" id="PF00032">
    <property type="entry name" value="Cytochrom_B_C"/>
    <property type="match status" value="1"/>
</dbReference>
<dbReference type="Pfam" id="PF00033">
    <property type="entry name" value="Cytochrome_B"/>
    <property type="match status" value="1"/>
</dbReference>
<dbReference type="PIRSF" id="PIRSF038885">
    <property type="entry name" value="COB"/>
    <property type="match status" value="1"/>
</dbReference>
<dbReference type="SUPFAM" id="SSF81648">
    <property type="entry name" value="a domain/subunit of cytochrome bc1 complex (Ubiquinol-cytochrome c reductase)"/>
    <property type="match status" value="1"/>
</dbReference>
<dbReference type="SUPFAM" id="SSF81342">
    <property type="entry name" value="Transmembrane di-heme cytochromes"/>
    <property type="match status" value="1"/>
</dbReference>
<dbReference type="PROSITE" id="PS51003">
    <property type="entry name" value="CYTB_CTER"/>
    <property type="match status" value="1"/>
</dbReference>
<dbReference type="PROSITE" id="PS51002">
    <property type="entry name" value="CYTB_NTER"/>
    <property type="match status" value="1"/>
</dbReference>
<sequence length="379" mass="42804">MTNIRKSHPLIKIINDSFIDLPAPSNISAWWNFGSLLGICLALQILTGLFLAMHYTSDTTTAFSSVTHICRDVNYGWVLRYLHANGASMFFICLYLHVGRGLYYGSYLFKETWNMGVILLFAVMATAFMGYVLPWGQMSFWGATVITNLLSAIPYIGTNLVEWIWGGFSVDKATLTRFFAFHFLLPFIISALVMVHLLFLHETGSNNPTGIPSNVDMIPFHPYYTIKDILGLFMMILILLSLVLFSPDMLGDPDNYMPANPLNTPPHIKPEWYFLFAYAILRSIPNKLGGVLALVLSILILIIIPFLHTSKQRSMTFRPISQCLFWLLAADLLTLTWIGGQPVEHPYVIIGQLASILYFLIIIAIMPLAGLMENHLLKW</sequence>
<gene>
    <name type="primary">MT-CYB</name>
    <name type="synonym">COB</name>
    <name type="synonym">CYTB</name>
    <name type="synonym">MTCYB</name>
</gene>
<keyword id="KW-0249">Electron transport</keyword>
<keyword id="KW-0349">Heme</keyword>
<keyword id="KW-0408">Iron</keyword>
<keyword id="KW-0472">Membrane</keyword>
<keyword id="KW-0479">Metal-binding</keyword>
<keyword id="KW-0496">Mitochondrion</keyword>
<keyword id="KW-0999">Mitochondrion inner membrane</keyword>
<keyword id="KW-0679">Respiratory chain</keyword>
<keyword id="KW-0812">Transmembrane</keyword>
<keyword id="KW-1133">Transmembrane helix</keyword>
<keyword id="KW-0813">Transport</keyword>
<keyword id="KW-0830">Ubiquinone</keyword>